<name>RSMA_YERP3</name>
<dbReference type="EC" id="2.1.1.182" evidence="1"/>
<dbReference type="EMBL" id="CP000720">
    <property type="protein sequence ID" value="ABS47340.1"/>
    <property type="molecule type" value="Genomic_DNA"/>
</dbReference>
<dbReference type="RefSeq" id="WP_011191710.1">
    <property type="nucleotide sequence ID" value="NC_009708.1"/>
</dbReference>
<dbReference type="SMR" id="A7FMC1"/>
<dbReference type="GeneID" id="96664132"/>
<dbReference type="KEGG" id="ypi:YpsIP31758_3444"/>
<dbReference type="HOGENOM" id="CLU_041220_0_1_6"/>
<dbReference type="Proteomes" id="UP000002412">
    <property type="component" value="Chromosome"/>
</dbReference>
<dbReference type="GO" id="GO:0005829">
    <property type="term" value="C:cytosol"/>
    <property type="evidence" value="ECO:0007669"/>
    <property type="project" value="TreeGrafter"/>
</dbReference>
<dbReference type="GO" id="GO:0052908">
    <property type="term" value="F:16S rRNA (adenine(1518)-N(6)/adenine(1519)-N(6))-dimethyltransferase activity"/>
    <property type="evidence" value="ECO:0007669"/>
    <property type="project" value="UniProtKB-EC"/>
</dbReference>
<dbReference type="GO" id="GO:0003723">
    <property type="term" value="F:RNA binding"/>
    <property type="evidence" value="ECO:0007669"/>
    <property type="project" value="UniProtKB-KW"/>
</dbReference>
<dbReference type="CDD" id="cd02440">
    <property type="entry name" value="AdoMet_MTases"/>
    <property type="match status" value="1"/>
</dbReference>
<dbReference type="FunFam" id="1.10.8.100:FF:000001">
    <property type="entry name" value="Ribosomal RNA small subunit methyltransferase A"/>
    <property type="match status" value="1"/>
</dbReference>
<dbReference type="FunFam" id="3.40.50.150:FF:000006">
    <property type="entry name" value="Ribosomal RNA small subunit methyltransferase A"/>
    <property type="match status" value="1"/>
</dbReference>
<dbReference type="Gene3D" id="1.10.8.100">
    <property type="entry name" value="Ribosomal RNA adenine dimethylase-like, domain 2"/>
    <property type="match status" value="1"/>
</dbReference>
<dbReference type="Gene3D" id="3.40.50.150">
    <property type="entry name" value="Vaccinia Virus protein VP39"/>
    <property type="match status" value="1"/>
</dbReference>
<dbReference type="HAMAP" id="MF_00607">
    <property type="entry name" value="16SrRNA_methyltr_A"/>
    <property type="match status" value="1"/>
</dbReference>
<dbReference type="InterPro" id="IPR001737">
    <property type="entry name" value="KsgA/Erm"/>
</dbReference>
<dbReference type="InterPro" id="IPR023165">
    <property type="entry name" value="rRNA_Ade_diMease-like_C"/>
</dbReference>
<dbReference type="InterPro" id="IPR020596">
    <property type="entry name" value="rRNA_Ade_Mease_Trfase_CS"/>
</dbReference>
<dbReference type="InterPro" id="IPR020598">
    <property type="entry name" value="rRNA_Ade_methylase_Trfase_N"/>
</dbReference>
<dbReference type="InterPro" id="IPR011530">
    <property type="entry name" value="rRNA_adenine_dimethylase"/>
</dbReference>
<dbReference type="InterPro" id="IPR029063">
    <property type="entry name" value="SAM-dependent_MTases_sf"/>
</dbReference>
<dbReference type="NCBIfam" id="TIGR00755">
    <property type="entry name" value="ksgA"/>
    <property type="match status" value="1"/>
</dbReference>
<dbReference type="PANTHER" id="PTHR11727">
    <property type="entry name" value="DIMETHYLADENOSINE TRANSFERASE"/>
    <property type="match status" value="1"/>
</dbReference>
<dbReference type="PANTHER" id="PTHR11727:SF7">
    <property type="entry name" value="DIMETHYLADENOSINE TRANSFERASE-RELATED"/>
    <property type="match status" value="1"/>
</dbReference>
<dbReference type="Pfam" id="PF00398">
    <property type="entry name" value="RrnaAD"/>
    <property type="match status" value="1"/>
</dbReference>
<dbReference type="SMART" id="SM00650">
    <property type="entry name" value="rADc"/>
    <property type="match status" value="1"/>
</dbReference>
<dbReference type="SUPFAM" id="SSF53335">
    <property type="entry name" value="S-adenosyl-L-methionine-dependent methyltransferases"/>
    <property type="match status" value="1"/>
</dbReference>
<dbReference type="PROSITE" id="PS01131">
    <property type="entry name" value="RRNA_A_DIMETH"/>
    <property type="match status" value="1"/>
</dbReference>
<dbReference type="PROSITE" id="PS51689">
    <property type="entry name" value="SAM_RNA_A_N6_MT"/>
    <property type="match status" value="1"/>
</dbReference>
<protein>
    <recommendedName>
        <fullName evidence="1">Ribosomal RNA small subunit methyltransferase A</fullName>
        <ecNumber evidence="1">2.1.1.182</ecNumber>
    </recommendedName>
    <alternativeName>
        <fullName evidence="1">16S rRNA (adenine(1518)-N(6)/adenine(1519)-N(6))-dimethyltransferase</fullName>
    </alternativeName>
    <alternativeName>
        <fullName evidence="1">16S rRNA dimethyladenosine transferase</fullName>
    </alternativeName>
    <alternativeName>
        <fullName evidence="1">16S rRNA dimethylase</fullName>
    </alternativeName>
    <alternativeName>
        <fullName evidence="1">S-adenosylmethionine-6-N', N'-adenosyl(rRNA) dimethyltransferase</fullName>
    </alternativeName>
</protein>
<accession>A7FMC1</accession>
<keyword id="KW-0963">Cytoplasm</keyword>
<keyword id="KW-0489">Methyltransferase</keyword>
<keyword id="KW-0694">RNA-binding</keyword>
<keyword id="KW-0698">rRNA processing</keyword>
<keyword id="KW-0949">S-adenosyl-L-methionine</keyword>
<keyword id="KW-0808">Transferase</keyword>
<proteinExistence type="inferred from homology"/>
<feature type="chain" id="PRO_1000061288" description="Ribosomal RNA small subunit methyltransferase A">
    <location>
        <begin position="1"/>
        <end position="272"/>
    </location>
</feature>
<feature type="binding site" evidence="1">
    <location>
        <position position="18"/>
    </location>
    <ligand>
        <name>S-adenosyl-L-methionine</name>
        <dbReference type="ChEBI" id="CHEBI:59789"/>
    </ligand>
</feature>
<feature type="binding site" evidence="1">
    <location>
        <position position="20"/>
    </location>
    <ligand>
        <name>S-adenosyl-L-methionine</name>
        <dbReference type="ChEBI" id="CHEBI:59789"/>
    </ligand>
</feature>
<feature type="binding site" evidence="1">
    <location>
        <position position="45"/>
    </location>
    <ligand>
        <name>S-adenosyl-L-methionine</name>
        <dbReference type="ChEBI" id="CHEBI:59789"/>
    </ligand>
</feature>
<feature type="binding site" evidence="1">
    <location>
        <position position="66"/>
    </location>
    <ligand>
        <name>S-adenosyl-L-methionine</name>
        <dbReference type="ChEBI" id="CHEBI:59789"/>
    </ligand>
</feature>
<feature type="binding site" evidence="1">
    <location>
        <position position="91"/>
    </location>
    <ligand>
        <name>S-adenosyl-L-methionine</name>
        <dbReference type="ChEBI" id="CHEBI:59789"/>
    </ligand>
</feature>
<feature type="binding site" evidence="1">
    <location>
        <position position="113"/>
    </location>
    <ligand>
        <name>S-adenosyl-L-methionine</name>
        <dbReference type="ChEBI" id="CHEBI:59789"/>
    </ligand>
</feature>
<gene>
    <name evidence="1" type="primary">rsmA</name>
    <name evidence="1" type="synonym">ksgA</name>
    <name type="ordered locus">YpsIP31758_3444</name>
</gene>
<sequence length="272" mass="30428">MNNRVHQGHFARKRFGQNFLNDQFVIDSIVSAIHPVPGEAVVEIGPGLGALTEPVAARMDHMTVIELDRDLAARLASHPQLKDKLTIHQQDAMKVNFSELSEQAGQPLRVFGNLPYNISTPLMFHLFSYTDAIRDMHFMLQKEVVNRLVAGPNSKAYGRLTVMAQYYCNVIPVLEVPPTAFTPAPKVDSAVVRLIPHVQMPHPVGDVRMLSRITTQAFNQRRKTVRNSLGDLFTSEQLIELGIDPILRAENISVAQYCKLANWLSAQSTPQK</sequence>
<organism>
    <name type="scientific">Yersinia pseudotuberculosis serotype O:1b (strain IP 31758)</name>
    <dbReference type="NCBI Taxonomy" id="349747"/>
    <lineage>
        <taxon>Bacteria</taxon>
        <taxon>Pseudomonadati</taxon>
        <taxon>Pseudomonadota</taxon>
        <taxon>Gammaproteobacteria</taxon>
        <taxon>Enterobacterales</taxon>
        <taxon>Yersiniaceae</taxon>
        <taxon>Yersinia</taxon>
    </lineage>
</organism>
<evidence type="ECO:0000255" key="1">
    <source>
        <dbReference type="HAMAP-Rule" id="MF_00607"/>
    </source>
</evidence>
<reference key="1">
    <citation type="journal article" date="2007" name="PLoS Genet.">
        <title>The complete genome sequence of Yersinia pseudotuberculosis IP31758, the causative agent of Far East scarlet-like fever.</title>
        <authorList>
            <person name="Eppinger M."/>
            <person name="Rosovitz M.J."/>
            <person name="Fricke W.F."/>
            <person name="Rasko D.A."/>
            <person name="Kokorina G."/>
            <person name="Fayolle C."/>
            <person name="Lindler L.E."/>
            <person name="Carniel E."/>
            <person name="Ravel J."/>
        </authorList>
    </citation>
    <scope>NUCLEOTIDE SEQUENCE [LARGE SCALE GENOMIC DNA]</scope>
    <source>
        <strain>IP 31758</strain>
    </source>
</reference>
<comment type="function">
    <text evidence="1">Specifically dimethylates two adjacent adenosines (A1518 and A1519) in the loop of a conserved hairpin near the 3'-end of 16S rRNA in the 30S particle. May play a critical role in biogenesis of 30S subunits.</text>
</comment>
<comment type="catalytic activity">
    <reaction evidence="1">
        <text>adenosine(1518)/adenosine(1519) in 16S rRNA + 4 S-adenosyl-L-methionine = N(6)-dimethyladenosine(1518)/N(6)-dimethyladenosine(1519) in 16S rRNA + 4 S-adenosyl-L-homocysteine + 4 H(+)</text>
        <dbReference type="Rhea" id="RHEA:19609"/>
        <dbReference type="Rhea" id="RHEA-COMP:10232"/>
        <dbReference type="Rhea" id="RHEA-COMP:10233"/>
        <dbReference type="ChEBI" id="CHEBI:15378"/>
        <dbReference type="ChEBI" id="CHEBI:57856"/>
        <dbReference type="ChEBI" id="CHEBI:59789"/>
        <dbReference type="ChEBI" id="CHEBI:74411"/>
        <dbReference type="ChEBI" id="CHEBI:74493"/>
        <dbReference type="EC" id="2.1.1.182"/>
    </reaction>
</comment>
<comment type="subcellular location">
    <subcellularLocation>
        <location evidence="1">Cytoplasm</location>
    </subcellularLocation>
</comment>
<comment type="similarity">
    <text evidence="1">Belongs to the class I-like SAM-binding methyltransferase superfamily. rRNA adenine N(6)-methyltransferase family. RsmA subfamily.</text>
</comment>